<evidence type="ECO:0000269" key="1">
    <source>
    </source>
</evidence>
<evidence type="ECO:0000269" key="2">
    <source>
    </source>
</evidence>
<evidence type="ECO:0007829" key="3">
    <source>
        <dbReference type="PDB" id="1SS3"/>
    </source>
</evidence>
<name>ALL6_OLEEU</name>
<sequence>DEAQFKECYDTCHKECSDKGNGFTFCEMKCDTDCSVKDVKEKLENYKPKN</sequence>
<keyword id="KW-0002">3D-structure</keyword>
<keyword id="KW-0020">Allergen</keyword>
<keyword id="KW-0903">Direct protein sequencing</keyword>
<keyword id="KW-1015">Disulfide bond</keyword>
<proteinExistence type="evidence at protein level"/>
<reference key="1">
    <citation type="journal article" date="1997" name="FEBS Lett.">
        <title>Purification, amino acid sequence and immunological characterization of Ole e 6, a cysteine-enriched allergen from olive tree pollen.</title>
        <authorList>
            <person name="Batanero E."/>
            <person name="Ledesma A."/>
            <person name="Villalba M."/>
            <person name="Rodriguez R."/>
        </authorList>
    </citation>
    <scope>NUCLEOTIDE SEQUENCE [MRNA]</scope>
    <scope>PROTEIN SEQUENCE OF 1-24</scope>
    <scope>TISSUE SPECIFICITY</scope>
    <scope>ALLERGENICITY</scope>
    <source>
        <tissue>Pollen</tissue>
    </source>
</reference>
<reference key="2">
    <citation type="submission" date="2003-01" db="EMBL/GenBank/DDBJ databases">
        <title>Temporal and spatial gene expression of Ole e 6 allergen in olive (Olea europaea L.) pollen.</title>
        <authorList>
            <person name="Hamman Khalifa A."/>
            <person name="Alche J."/>
            <person name="Rodriguez Garcia M."/>
        </authorList>
    </citation>
    <scope>NUCLEOTIDE SEQUENCE [MRNA] OF 8-50</scope>
    <source>
        <tissue>Mesocarp</tissue>
    </source>
</reference>
<reference key="3">
    <citation type="submission" date="2002-10" db="EMBL/GenBank/DDBJ databases">
        <authorList>
            <person name="Hamman Khalifa A."/>
            <person name="Alche J."/>
            <person name="Rodriguez Garcia M."/>
        </authorList>
    </citation>
    <scope>NUCLEOTIDE SEQUENCE [GENOMIC DNA] OF 13-50</scope>
</reference>
<reference key="4">
    <citation type="journal article" date="2006" name="Anal. Chem.">
        <title>Profiling of hydrophilic proteins from Olea europaea olive pollen by MALDI TOF mass spectrometry.</title>
        <authorList>
            <person name="Napoli A."/>
            <person name="Aiello D."/>
            <person name="Di Donna L."/>
            <person name="Sajjad A."/>
            <person name="Perri E."/>
            <person name="Sindona G."/>
        </authorList>
    </citation>
    <scope>IDENTIFICATION BY MASS SPECTROMETRY</scope>
</reference>
<reference key="5">
    <citation type="journal article" date="2012" name="Talanta">
        <title>Analysis of olive allergens.</title>
        <authorList>
            <person name="Esteve C."/>
            <person name="Montealegre C."/>
            <person name="Marina M.L."/>
            <person name="Garcia M.C."/>
        </authorList>
    </citation>
    <scope>REVIEW</scope>
    <scope>NOMENCLATURE</scope>
</reference>
<reference key="6">
    <citation type="journal article" date="2004" name="J. Biol. Chem.">
        <title>NMR solution structure of Ole e 6, a major allergen from olive tree pollen.</title>
        <authorList>
            <person name="Trevino M.A."/>
            <person name="Garcia-Mayoral M.F."/>
            <person name="Barral P."/>
            <person name="Villalba M."/>
            <person name="Santoro J."/>
            <person name="Rico M."/>
            <person name="Rodriguez R."/>
            <person name="Bruix M."/>
        </authorList>
    </citation>
    <scope>STRUCTURE BY NMR</scope>
    <scope>DISULFIDE BONDS</scope>
</reference>
<organism>
    <name type="scientific">Olea europaea</name>
    <name type="common">Common olive</name>
    <dbReference type="NCBI Taxonomy" id="4146"/>
    <lineage>
        <taxon>Eukaryota</taxon>
        <taxon>Viridiplantae</taxon>
        <taxon>Streptophyta</taxon>
        <taxon>Embryophyta</taxon>
        <taxon>Tracheophyta</taxon>
        <taxon>Spermatophyta</taxon>
        <taxon>Magnoliopsida</taxon>
        <taxon>eudicotyledons</taxon>
        <taxon>Gunneridae</taxon>
        <taxon>Pentapetalae</taxon>
        <taxon>asterids</taxon>
        <taxon>lamiids</taxon>
        <taxon>Lamiales</taxon>
        <taxon>Oleaceae</taxon>
        <taxon>Oleeae</taxon>
        <taxon>Olea</taxon>
    </lineage>
</organism>
<accession>O24172</accession>
<accession>Q5DTB8</accession>
<accession>Q84UC2</accession>
<feature type="chain" id="PRO_0000064562" description="Major pollen allergen Ole e 6">
    <location>
        <begin position="1"/>
        <end position="50"/>
    </location>
</feature>
<feature type="disulfide bond" evidence="1">
    <location>
        <begin position="8"/>
        <end position="34"/>
    </location>
</feature>
<feature type="disulfide bond" evidence="1">
    <location>
        <begin position="12"/>
        <end position="30"/>
    </location>
</feature>
<feature type="disulfide bond" evidence="1">
    <location>
        <begin position="16"/>
        <end position="26"/>
    </location>
</feature>
<feature type="helix" evidence="3">
    <location>
        <begin position="3"/>
        <end position="17"/>
    </location>
</feature>
<feature type="turn" evidence="3">
    <location>
        <begin position="18"/>
        <end position="20"/>
    </location>
</feature>
<feature type="helix" evidence="3">
    <location>
        <begin position="23"/>
        <end position="33"/>
    </location>
</feature>
<protein>
    <recommendedName>
        <fullName>Major pollen allergen Ole e 6</fullName>
    </recommendedName>
    <allergenName>Ole e 6</allergenName>
</protein>
<gene>
    <name type="primary">OLE6</name>
</gene>
<comment type="tissue specificity">
    <text evidence="2">Expressed in pollen.</text>
</comment>
<comment type="allergen">
    <text evidence="2">Causes an allergic reaction in human. Major allergen from olive pollen.</text>
</comment>
<dbReference type="EMBL" id="U86342">
    <property type="protein sequence ID" value="AAB66909.1"/>
    <property type="molecule type" value="mRNA"/>
</dbReference>
<dbReference type="EMBL" id="AY172112">
    <property type="protein sequence ID" value="AAO33896.1"/>
    <property type="molecule type" value="Genomic_DNA"/>
</dbReference>
<dbReference type="EMBL" id="AY221958">
    <property type="protein sequence ID" value="AAO34670.1"/>
    <property type="molecule type" value="mRNA"/>
</dbReference>
<dbReference type="PDB" id="1SS3">
    <property type="method" value="NMR"/>
    <property type="chains" value="A=1-50"/>
</dbReference>
<dbReference type="PDBsum" id="1SS3"/>
<dbReference type="SMR" id="O24172"/>
<dbReference type="Allergome" id="3387">
    <property type="allergen name" value="Ole e 6.0101"/>
</dbReference>
<dbReference type="Allergome" id="494">
    <property type="allergen name" value="Ole e 6"/>
</dbReference>
<dbReference type="EnsemblPlants" id="OE9A022228T1">
    <property type="protein sequence ID" value="OE9A022228C1"/>
    <property type="gene ID" value="OE9A022228"/>
</dbReference>
<dbReference type="EnsemblPlants" id="Oeu029462.1">
    <property type="protein sequence ID" value="Oeu029462.1"/>
    <property type="gene ID" value="Oeu029462"/>
</dbReference>
<dbReference type="Gramene" id="OE9A022228T1">
    <property type="protein sequence ID" value="OE9A022228C1"/>
    <property type="gene ID" value="OE9A022228"/>
</dbReference>
<dbReference type="Gramene" id="Oeu029462.1">
    <property type="protein sequence ID" value="Oeu029462.1"/>
    <property type="gene ID" value="Oeu029462"/>
</dbReference>
<dbReference type="EvolutionaryTrace" id="O24172"/>
<dbReference type="GO" id="GO:0019864">
    <property type="term" value="F:IgG binding"/>
    <property type="evidence" value="ECO:0000314"/>
    <property type="project" value="CAFA"/>
</dbReference>
<dbReference type="DisProt" id="DP00580"/>
<dbReference type="FunFam" id="1.10.287.720:FF:000001">
    <property type="entry name" value="Major pollen allergen Ole e 6"/>
    <property type="match status" value="1"/>
</dbReference>
<dbReference type="Gene3D" id="1.10.287.720">
    <property type="entry name" value="Pollen allergen ole e 6"/>
    <property type="match status" value="1"/>
</dbReference>
<dbReference type="InterPro" id="IPR015333">
    <property type="entry name" value="Pollen_allergen_ole-e-6"/>
</dbReference>
<dbReference type="InterPro" id="IPR036466">
    <property type="entry name" value="Pollen_allergen_ole-e-6_sf"/>
</dbReference>
<dbReference type="PANTHER" id="PTHR35632">
    <property type="entry name" value="MAJOR POLLEN ALLERGEN OLE E 6-LIKE"/>
    <property type="match status" value="1"/>
</dbReference>
<dbReference type="PANTHER" id="PTHR35632:SF1">
    <property type="entry name" value="MAJOR POLLEN ALLERGEN OLE E 6-LIKE"/>
    <property type="match status" value="1"/>
</dbReference>
<dbReference type="Pfam" id="PF09253">
    <property type="entry name" value="Ole_e_6"/>
    <property type="match status" value="1"/>
</dbReference>
<dbReference type="SUPFAM" id="SSF111388">
    <property type="entry name" value="Pollen allergen ole e 6"/>
    <property type="match status" value="1"/>
</dbReference>